<name>RR18_ANTAG</name>
<reference key="1">
    <citation type="journal article" date="2003" name="Nucleic Acids Res.">
        <title>The complete nucleotide sequence of the hornwort (Anthoceros formosae) chloroplast genome: insight into the earliest land plants.</title>
        <authorList>
            <person name="Kugita M."/>
            <person name="Kaneko A."/>
            <person name="Yamamoto Y."/>
            <person name="Takeya Y."/>
            <person name="Matsumoto T."/>
            <person name="Yoshinaga K."/>
        </authorList>
    </citation>
    <scope>NUCLEOTIDE SEQUENCE [LARGE SCALE GENOMIC DNA]</scope>
    <scope>RNA EDITING</scope>
</reference>
<reference key="2">
    <citation type="journal article" date="2003" name="Nucleic Acids Res.">
        <title>RNA editing in hornwort chloroplasts makes more than half the genes functional.</title>
        <authorList>
            <person name="Kugita M."/>
            <person name="Yamamoto Y."/>
            <person name="Fujikawa T."/>
            <person name="Matsumoto T."/>
            <person name="Yoshinaga K."/>
        </authorList>
    </citation>
    <scope>NUCLEOTIDE SEQUENCE [MRNA]</scope>
    <scope>RNA EDITING</scope>
    <source>
        <tissue>Thallus</tissue>
    </source>
</reference>
<organism>
    <name type="scientific">Anthoceros angustus</name>
    <name type="common">Hornwort</name>
    <name type="synonym">Anthoceros formosae</name>
    <dbReference type="NCBI Taxonomy" id="48387"/>
    <lineage>
        <taxon>Eukaryota</taxon>
        <taxon>Viridiplantae</taxon>
        <taxon>Streptophyta</taxon>
        <taxon>Embryophyta</taxon>
        <taxon>Anthocerotophyta</taxon>
        <taxon>Anthocerotopsida</taxon>
        <taxon>Anthocerotidae</taxon>
        <taxon>Anthocerotales</taxon>
        <taxon>Anthocerotaceae</taxon>
        <taxon>Anthoceros</taxon>
    </lineage>
</organism>
<sequence>MNKFKRSSRRRLPPIRSGEIIDYKNTSLLRRFISEQGKILSRRMNKLTSKQQRLVTVAIKRARILALLPFLNNES</sequence>
<comment type="subunit">
    <text>Part of the 30S ribosomal subunit.</text>
</comment>
<comment type="subcellular location">
    <subcellularLocation>
        <location>Plastid</location>
        <location>Chloroplast</location>
    </subcellularLocation>
</comment>
<comment type="RNA editing">
    <location>
        <position position="31" evidence="1 2"/>
    </location>
    <location>
        <position position="63" evidence="1 2"/>
    </location>
    <text>The nonsense codon at position 31 is modified to a sense codon.</text>
</comment>
<comment type="similarity">
    <text evidence="3">Belongs to the bacterial ribosomal protein bS18 family.</text>
</comment>
<proteinExistence type="evidence at transcript level"/>
<dbReference type="EMBL" id="AB086179">
    <property type="protein sequence ID" value="BAC55371.1"/>
    <property type="molecule type" value="Genomic_DNA"/>
</dbReference>
<dbReference type="EMBL" id="AB087458">
    <property type="protein sequence ID" value="BAC55467.1"/>
    <property type="molecule type" value="mRNA"/>
</dbReference>
<dbReference type="RefSeq" id="NP_777435.1">
    <property type="nucleotide sequence ID" value="NC_004543.1"/>
</dbReference>
<dbReference type="SMR" id="Q85BK3"/>
<dbReference type="GeneID" id="2553430"/>
<dbReference type="GO" id="GO:0009507">
    <property type="term" value="C:chloroplast"/>
    <property type="evidence" value="ECO:0007669"/>
    <property type="project" value="UniProtKB-SubCell"/>
</dbReference>
<dbReference type="GO" id="GO:0005763">
    <property type="term" value="C:mitochondrial small ribosomal subunit"/>
    <property type="evidence" value="ECO:0007669"/>
    <property type="project" value="TreeGrafter"/>
</dbReference>
<dbReference type="GO" id="GO:0070181">
    <property type="term" value="F:small ribosomal subunit rRNA binding"/>
    <property type="evidence" value="ECO:0007669"/>
    <property type="project" value="TreeGrafter"/>
</dbReference>
<dbReference type="GO" id="GO:0003735">
    <property type="term" value="F:structural constituent of ribosome"/>
    <property type="evidence" value="ECO:0007669"/>
    <property type="project" value="InterPro"/>
</dbReference>
<dbReference type="GO" id="GO:0006412">
    <property type="term" value="P:translation"/>
    <property type="evidence" value="ECO:0007669"/>
    <property type="project" value="UniProtKB-UniRule"/>
</dbReference>
<dbReference type="FunFam" id="4.10.640.10:FF:000002">
    <property type="entry name" value="30S ribosomal protein S18, chloroplastic"/>
    <property type="match status" value="1"/>
</dbReference>
<dbReference type="Gene3D" id="4.10.640.10">
    <property type="entry name" value="Ribosomal protein S18"/>
    <property type="match status" value="1"/>
</dbReference>
<dbReference type="HAMAP" id="MF_00270">
    <property type="entry name" value="Ribosomal_bS18"/>
    <property type="match status" value="1"/>
</dbReference>
<dbReference type="InterPro" id="IPR001648">
    <property type="entry name" value="Ribosomal_bS18"/>
</dbReference>
<dbReference type="InterPro" id="IPR018275">
    <property type="entry name" value="Ribosomal_bS18_CS"/>
</dbReference>
<dbReference type="InterPro" id="IPR036870">
    <property type="entry name" value="Ribosomal_bS18_sf"/>
</dbReference>
<dbReference type="NCBIfam" id="TIGR00165">
    <property type="entry name" value="S18"/>
    <property type="match status" value="1"/>
</dbReference>
<dbReference type="PANTHER" id="PTHR13479">
    <property type="entry name" value="30S RIBOSOMAL PROTEIN S18"/>
    <property type="match status" value="1"/>
</dbReference>
<dbReference type="PANTHER" id="PTHR13479:SF40">
    <property type="entry name" value="SMALL RIBOSOMAL SUBUNIT PROTEIN BS18M"/>
    <property type="match status" value="1"/>
</dbReference>
<dbReference type="Pfam" id="PF01084">
    <property type="entry name" value="Ribosomal_S18"/>
    <property type="match status" value="1"/>
</dbReference>
<dbReference type="PRINTS" id="PR00974">
    <property type="entry name" value="RIBOSOMALS18"/>
</dbReference>
<dbReference type="SUPFAM" id="SSF46911">
    <property type="entry name" value="Ribosomal protein S18"/>
    <property type="match status" value="1"/>
</dbReference>
<dbReference type="PROSITE" id="PS00057">
    <property type="entry name" value="RIBOSOMAL_S18"/>
    <property type="match status" value="1"/>
</dbReference>
<accession>Q85BK3</accession>
<geneLocation type="chloroplast"/>
<feature type="chain" id="PRO_0000111275" description="Small ribosomal subunit protein bS18c">
    <location>
        <begin position="1"/>
        <end position="75"/>
    </location>
</feature>
<evidence type="ECO:0000269" key="1">
    <source>
    </source>
</evidence>
<evidence type="ECO:0000269" key="2">
    <source>
    </source>
</evidence>
<evidence type="ECO:0000305" key="3"/>
<keyword id="KW-0150">Chloroplast</keyword>
<keyword id="KW-0934">Plastid</keyword>
<keyword id="KW-0687">Ribonucleoprotein</keyword>
<keyword id="KW-0689">Ribosomal protein</keyword>
<keyword id="KW-0691">RNA editing</keyword>
<keyword id="KW-0694">RNA-binding</keyword>
<keyword id="KW-0699">rRNA-binding</keyword>
<protein>
    <recommendedName>
        <fullName evidence="3">Small ribosomal subunit protein bS18c</fullName>
    </recommendedName>
    <alternativeName>
        <fullName>30S ribosomal protein S18, chloroplastic</fullName>
    </alternativeName>
</protein>
<gene>
    <name type="primary">rps18</name>
</gene>